<comment type="function">
    <text evidence="1">Catalyzes the radical-mediated insertion of two sulfur atoms into the C-6 and C-8 positions of the octanoyl moiety bound to the lipoyl domains of lipoate-dependent enzymes, thereby converting the octanoylated domains into lipoylated derivatives.</text>
</comment>
<comment type="catalytic activity">
    <reaction evidence="1">
        <text>[[Fe-S] cluster scaffold protein carrying a second [4Fe-4S](2+) cluster] + N(6)-octanoyl-L-lysyl-[protein] + 2 oxidized [2Fe-2S]-[ferredoxin] + 2 S-adenosyl-L-methionine + 4 H(+) = [[Fe-S] cluster scaffold protein] + N(6)-[(R)-dihydrolipoyl]-L-lysyl-[protein] + 4 Fe(3+) + 2 hydrogen sulfide + 2 5'-deoxyadenosine + 2 L-methionine + 2 reduced [2Fe-2S]-[ferredoxin]</text>
        <dbReference type="Rhea" id="RHEA:16585"/>
        <dbReference type="Rhea" id="RHEA-COMP:9928"/>
        <dbReference type="Rhea" id="RHEA-COMP:10000"/>
        <dbReference type="Rhea" id="RHEA-COMP:10001"/>
        <dbReference type="Rhea" id="RHEA-COMP:10475"/>
        <dbReference type="Rhea" id="RHEA-COMP:14568"/>
        <dbReference type="Rhea" id="RHEA-COMP:14569"/>
        <dbReference type="ChEBI" id="CHEBI:15378"/>
        <dbReference type="ChEBI" id="CHEBI:17319"/>
        <dbReference type="ChEBI" id="CHEBI:29034"/>
        <dbReference type="ChEBI" id="CHEBI:29919"/>
        <dbReference type="ChEBI" id="CHEBI:33722"/>
        <dbReference type="ChEBI" id="CHEBI:33737"/>
        <dbReference type="ChEBI" id="CHEBI:33738"/>
        <dbReference type="ChEBI" id="CHEBI:57844"/>
        <dbReference type="ChEBI" id="CHEBI:59789"/>
        <dbReference type="ChEBI" id="CHEBI:78809"/>
        <dbReference type="ChEBI" id="CHEBI:83100"/>
        <dbReference type="EC" id="2.8.1.8"/>
    </reaction>
</comment>
<comment type="cofactor">
    <cofactor evidence="1">
        <name>[4Fe-4S] cluster</name>
        <dbReference type="ChEBI" id="CHEBI:49883"/>
    </cofactor>
    <text evidence="1">Binds 2 [4Fe-4S] clusters per subunit. One cluster is coordinated with 3 cysteines and an exchangeable S-adenosyl-L-methionine.</text>
</comment>
<comment type="pathway">
    <text evidence="1">Protein modification; protein lipoylation via endogenous pathway; protein N(6)-(lipoyl)lysine from octanoyl-[acyl-carrier-protein]: step 2/2.</text>
</comment>
<comment type="subcellular location">
    <subcellularLocation>
        <location evidence="1">Cytoplasm</location>
    </subcellularLocation>
</comment>
<comment type="similarity">
    <text evidence="1">Belongs to the radical SAM superfamily. Lipoyl synthase family.</text>
</comment>
<name>LIPA_NEIM0</name>
<organism>
    <name type="scientific">Neisseria meningitidis serogroup C (strain 053442)</name>
    <dbReference type="NCBI Taxonomy" id="374833"/>
    <lineage>
        <taxon>Bacteria</taxon>
        <taxon>Pseudomonadati</taxon>
        <taxon>Pseudomonadota</taxon>
        <taxon>Betaproteobacteria</taxon>
        <taxon>Neisseriales</taxon>
        <taxon>Neisseriaceae</taxon>
        <taxon>Neisseria</taxon>
    </lineage>
</organism>
<keyword id="KW-0004">4Fe-4S</keyword>
<keyword id="KW-0963">Cytoplasm</keyword>
<keyword id="KW-0408">Iron</keyword>
<keyword id="KW-0411">Iron-sulfur</keyword>
<keyword id="KW-0479">Metal-binding</keyword>
<keyword id="KW-0949">S-adenosyl-L-methionine</keyword>
<keyword id="KW-0808">Transferase</keyword>
<proteinExistence type="inferred from homology"/>
<sequence length="322" mass="36667">MSEIKTDDPKRGIKLRGADKTARIPIKVVPLQEKLKKPEWIRAKLPSRKFFEIKDILREQKMHTVCEEASCPNIGECFSKGTATFMIMGDICTRRCPFCDVGHGRPNMLDPDEPRNLAESVKAMNLRYVVITSVDRDDLRDGGAQHFADCIKAIRETSPNTKIEILVPDFRGRLDIALKILAETPPDVMNHNLETHPSLYRKARPGANYQHSLDLLKRYKEMMPHIPTKSGIMVGLGETDEDVREIMRDMRAHNIEMITIGQYLQPSDGHLPVLRYVTPEQFKIFEKEAYELGFSNAAIGAMVRSSYHADEQAAEALRECEF</sequence>
<gene>
    <name evidence="1" type="primary">lipA</name>
    <name type="ordered locus">NMCC_1095</name>
</gene>
<evidence type="ECO:0000255" key="1">
    <source>
        <dbReference type="HAMAP-Rule" id="MF_00206"/>
    </source>
</evidence>
<evidence type="ECO:0000255" key="2">
    <source>
        <dbReference type="PROSITE-ProRule" id="PRU01266"/>
    </source>
</evidence>
<accession>A9LZ95</accession>
<reference key="1">
    <citation type="journal article" date="2008" name="Genomics">
        <title>Characterization of ST-4821 complex, a unique Neisseria meningitidis clone.</title>
        <authorList>
            <person name="Peng J."/>
            <person name="Yang L."/>
            <person name="Yang F."/>
            <person name="Yang J."/>
            <person name="Yan Y."/>
            <person name="Nie H."/>
            <person name="Zhang X."/>
            <person name="Xiong Z."/>
            <person name="Jiang Y."/>
            <person name="Cheng F."/>
            <person name="Xu X."/>
            <person name="Chen S."/>
            <person name="Sun L."/>
            <person name="Li W."/>
            <person name="Shen Y."/>
            <person name="Shao Z."/>
            <person name="Liang X."/>
            <person name="Xu J."/>
            <person name="Jin Q."/>
        </authorList>
    </citation>
    <scope>NUCLEOTIDE SEQUENCE [LARGE SCALE GENOMIC DNA]</scope>
    <source>
        <strain>053442</strain>
    </source>
</reference>
<protein>
    <recommendedName>
        <fullName evidence="1">Lipoyl synthase</fullName>
        <ecNumber evidence="1">2.8.1.8</ecNumber>
    </recommendedName>
    <alternativeName>
        <fullName evidence="1">Lip-syn</fullName>
        <shortName evidence="1">LS</shortName>
    </alternativeName>
    <alternativeName>
        <fullName evidence="1">Lipoate synthase</fullName>
    </alternativeName>
    <alternativeName>
        <fullName evidence="1">Lipoic acid synthase</fullName>
    </alternativeName>
    <alternativeName>
        <fullName evidence="1">Sulfur insertion protein LipA</fullName>
    </alternativeName>
</protein>
<feature type="chain" id="PRO_1000077962" description="Lipoyl synthase">
    <location>
        <begin position="1"/>
        <end position="322"/>
    </location>
</feature>
<feature type="domain" description="Radical SAM core" evidence="2">
    <location>
        <begin position="78"/>
        <end position="295"/>
    </location>
</feature>
<feature type="binding site" evidence="1">
    <location>
        <position position="66"/>
    </location>
    <ligand>
        <name>[4Fe-4S] cluster</name>
        <dbReference type="ChEBI" id="CHEBI:49883"/>
        <label>1</label>
    </ligand>
</feature>
<feature type="binding site" evidence="1">
    <location>
        <position position="71"/>
    </location>
    <ligand>
        <name>[4Fe-4S] cluster</name>
        <dbReference type="ChEBI" id="CHEBI:49883"/>
        <label>1</label>
    </ligand>
</feature>
<feature type="binding site" evidence="1">
    <location>
        <position position="77"/>
    </location>
    <ligand>
        <name>[4Fe-4S] cluster</name>
        <dbReference type="ChEBI" id="CHEBI:49883"/>
        <label>1</label>
    </ligand>
</feature>
<feature type="binding site" evidence="1">
    <location>
        <position position="92"/>
    </location>
    <ligand>
        <name>[4Fe-4S] cluster</name>
        <dbReference type="ChEBI" id="CHEBI:49883"/>
        <label>2</label>
        <note>4Fe-4S-S-AdoMet</note>
    </ligand>
</feature>
<feature type="binding site" evidence="1">
    <location>
        <position position="96"/>
    </location>
    <ligand>
        <name>[4Fe-4S] cluster</name>
        <dbReference type="ChEBI" id="CHEBI:49883"/>
        <label>2</label>
        <note>4Fe-4S-S-AdoMet</note>
    </ligand>
</feature>
<feature type="binding site" evidence="1">
    <location>
        <position position="99"/>
    </location>
    <ligand>
        <name>[4Fe-4S] cluster</name>
        <dbReference type="ChEBI" id="CHEBI:49883"/>
        <label>2</label>
        <note>4Fe-4S-S-AdoMet</note>
    </ligand>
</feature>
<feature type="binding site" evidence="1">
    <location>
        <position position="306"/>
    </location>
    <ligand>
        <name>[4Fe-4S] cluster</name>
        <dbReference type="ChEBI" id="CHEBI:49883"/>
        <label>1</label>
    </ligand>
</feature>
<dbReference type="EC" id="2.8.1.8" evidence="1"/>
<dbReference type="EMBL" id="CP000381">
    <property type="protein sequence ID" value="ABX73272.1"/>
    <property type="molecule type" value="Genomic_DNA"/>
</dbReference>
<dbReference type="RefSeq" id="WP_012221662.1">
    <property type="nucleotide sequence ID" value="NC_010120.1"/>
</dbReference>
<dbReference type="SMR" id="A9LZ95"/>
<dbReference type="KEGG" id="nmn:NMCC_1095"/>
<dbReference type="HOGENOM" id="CLU_033144_2_1_4"/>
<dbReference type="UniPathway" id="UPA00538">
    <property type="reaction ID" value="UER00593"/>
</dbReference>
<dbReference type="Proteomes" id="UP000001177">
    <property type="component" value="Chromosome"/>
</dbReference>
<dbReference type="GO" id="GO:0005737">
    <property type="term" value="C:cytoplasm"/>
    <property type="evidence" value="ECO:0007669"/>
    <property type="project" value="UniProtKB-SubCell"/>
</dbReference>
<dbReference type="GO" id="GO:0051539">
    <property type="term" value="F:4 iron, 4 sulfur cluster binding"/>
    <property type="evidence" value="ECO:0007669"/>
    <property type="project" value="UniProtKB-UniRule"/>
</dbReference>
<dbReference type="GO" id="GO:0016992">
    <property type="term" value="F:lipoate synthase activity"/>
    <property type="evidence" value="ECO:0007669"/>
    <property type="project" value="UniProtKB-UniRule"/>
</dbReference>
<dbReference type="GO" id="GO:0046872">
    <property type="term" value="F:metal ion binding"/>
    <property type="evidence" value="ECO:0007669"/>
    <property type="project" value="UniProtKB-KW"/>
</dbReference>
<dbReference type="CDD" id="cd01335">
    <property type="entry name" value="Radical_SAM"/>
    <property type="match status" value="1"/>
</dbReference>
<dbReference type="FunFam" id="3.20.20.70:FF:000023">
    <property type="entry name" value="Lipoyl synthase"/>
    <property type="match status" value="1"/>
</dbReference>
<dbReference type="Gene3D" id="3.20.20.70">
    <property type="entry name" value="Aldolase class I"/>
    <property type="match status" value="1"/>
</dbReference>
<dbReference type="HAMAP" id="MF_00206">
    <property type="entry name" value="Lipoyl_synth"/>
    <property type="match status" value="1"/>
</dbReference>
<dbReference type="InterPro" id="IPR013785">
    <property type="entry name" value="Aldolase_TIM"/>
</dbReference>
<dbReference type="InterPro" id="IPR006638">
    <property type="entry name" value="Elp3/MiaA/NifB-like_rSAM"/>
</dbReference>
<dbReference type="InterPro" id="IPR031691">
    <property type="entry name" value="LIAS_N"/>
</dbReference>
<dbReference type="InterPro" id="IPR003698">
    <property type="entry name" value="Lipoyl_synth"/>
</dbReference>
<dbReference type="InterPro" id="IPR007197">
    <property type="entry name" value="rSAM"/>
</dbReference>
<dbReference type="NCBIfam" id="TIGR00510">
    <property type="entry name" value="lipA"/>
    <property type="match status" value="1"/>
</dbReference>
<dbReference type="NCBIfam" id="NF004019">
    <property type="entry name" value="PRK05481.1"/>
    <property type="match status" value="1"/>
</dbReference>
<dbReference type="NCBIfam" id="NF009544">
    <property type="entry name" value="PRK12928.1"/>
    <property type="match status" value="1"/>
</dbReference>
<dbReference type="PANTHER" id="PTHR10949">
    <property type="entry name" value="LIPOYL SYNTHASE"/>
    <property type="match status" value="1"/>
</dbReference>
<dbReference type="PANTHER" id="PTHR10949:SF0">
    <property type="entry name" value="LIPOYL SYNTHASE, MITOCHONDRIAL"/>
    <property type="match status" value="1"/>
</dbReference>
<dbReference type="Pfam" id="PF16881">
    <property type="entry name" value="LIAS_N"/>
    <property type="match status" value="1"/>
</dbReference>
<dbReference type="Pfam" id="PF04055">
    <property type="entry name" value="Radical_SAM"/>
    <property type="match status" value="1"/>
</dbReference>
<dbReference type="PIRSF" id="PIRSF005963">
    <property type="entry name" value="Lipoyl_synth"/>
    <property type="match status" value="1"/>
</dbReference>
<dbReference type="SFLD" id="SFLDF00271">
    <property type="entry name" value="lipoyl_synthase"/>
    <property type="match status" value="1"/>
</dbReference>
<dbReference type="SFLD" id="SFLDS00029">
    <property type="entry name" value="Radical_SAM"/>
    <property type="match status" value="1"/>
</dbReference>
<dbReference type="SMART" id="SM00729">
    <property type="entry name" value="Elp3"/>
    <property type="match status" value="1"/>
</dbReference>
<dbReference type="SUPFAM" id="SSF102114">
    <property type="entry name" value="Radical SAM enzymes"/>
    <property type="match status" value="1"/>
</dbReference>
<dbReference type="PROSITE" id="PS51918">
    <property type="entry name" value="RADICAL_SAM"/>
    <property type="match status" value="1"/>
</dbReference>